<protein>
    <recommendedName>
        <fullName evidence="1">tRNA uridine 5-carboxymethylaminomethyl modification enzyme MnmG</fullName>
    </recommendedName>
    <alternativeName>
        <fullName evidence="1">Glucose-inhibited division protein A</fullName>
    </alternativeName>
</protein>
<feature type="chain" id="PRO_0000345271" description="tRNA uridine 5-carboxymethylaminomethyl modification enzyme MnmG">
    <location>
        <begin position="1"/>
        <end position="627"/>
    </location>
</feature>
<feature type="binding site" evidence="1">
    <location>
        <begin position="16"/>
        <end position="21"/>
    </location>
    <ligand>
        <name>FAD</name>
        <dbReference type="ChEBI" id="CHEBI:57692"/>
    </ligand>
</feature>
<feature type="binding site" evidence="1">
    <location>
        <position position="128"/>
    </location>
    <ligand>
        <name>FAD</name>
        <dbReference type="ChEBI" id="CHEBI:57692"/>
    </ligand>
</feature>
<feature type="binding site" evidence="1">
    <location>
        <position position="183"/>
    </location>
    <ligand>
        <name>FAD</name>
        <dbReference type="ChEBI" id="CHEBI:57692"/>
    </ligand>
</feature>
<feature type="binding site" evidence="1">
    <location>
        <begin position="277"/>
        <end position="291"/>
    </location>
    <ligand>
        <name>NAD(+)</name>
        <dbReference type="ChEBI" id="CHEBI:57540"/>
    </ligand>
</feature>
<feature type="binding site" evidence="1">
    <location>
        <position position="374"/>
    </location>
    <ligand>
        <name>FAD</name>
        <dbReference type="ChEBI" id="CHEBI:57692"/>
    </ligand>
</feature>
<name>MNMG_FINM2</name>
<accession>B0S3V1</accession>
<dbReference type="EMBL" id="AP008971">
    <property type="protein sequence ID" value="BAG09041.1"/>
    <property type="molecule type" value="Genomic_DNA"/>
</dbReference>
<dbReference type="RefSeq" id="WP_012291240.1">
    <property type="nucleotide sequence ID" value="NC_010376.1"/>
</dbReference>
<dbReference type="SMR" id="B0S3V1"/>
<dbReference type="STRING" id="334413.FMG_1623"/>
<dbReference type="KEGG" id="fma:FMG_1623"/>
<dbReference type="eggNOG" id="COG0445">
    <property type="taxonomic scope" value="Bacteria"/>
</dbReference>
<dbReference type="HOGENOM" id="CLU_007831_2_2_9"/>
<dbReference type="Proteomes" id="UP000001319">
    <property type="component" value="Chromosome"/>
</dbReference>
<dbReference type="GO" id="GO:0005829">
    <property type="term" value="C:cytosol"/>
    <property type="evidence" value="ECO:0007669"/>
    <property type="project" value="TreeGrafter"/>
</dbReference>
<dbReference type="GO" id="GO:0050660">
    <property type="term" value="F:flavin adenine dinucleotide binding"/>
    <property type="evidence" value="ECO:0007669"/>
    <property type="project" value="UniProtKB-UniRule"/>
</dbReference>
<dbReference type="GO" id="GO:0030488">
    <property type="term" value="P:tRNA methylation"/>
    <property type="evidence" value="ECO:0007669"/>
    <property type="project" value="TreeGrafter"/>
</dbReference>
<dbReference type="GO" id="GO:0002098">
    <property type="term" value="P:tRNA wobble uridine modification"/>
    <property type="evidence" value="ECO:0007669"/>
    <property type="project" value="InterPro"/>
</dbReference>
<dbReference type="FunFam" id="1.10.10.1800:FF:000001">
    <property type="entry name" value="tRNA uridine 5-carboxymethylaminomethyl modification enzyme MnmG"/>
    <property type="match status" value="1"/>
</dbReference>
<dbReference type="FunFam" id="1.10.150.570:FF:000001">
    <property type="entry name" value="tRNA uridine 5-carboxymethylaminomethyl modification enzyme MnmG"/>
    <property type="match status" value="1"/>
</dbReference>
<dbReference type="FunFam" id="3.50.50.60:FF:000002">
    <property type="entry name" value="tRNA uridine 5-carboxymethylaminomethyl modification enzyme MnmG"/>
    <property type="match status" value="1"/>
</dbReference>
<dbReference type="Gene3D" id="3.50.50.60">
    <property type="entry name" value="FAD/NAD(P)-binding domain"/>
    <property type="match status" value="2"/>
</dbReference>
<dbReference type="Gene3D" id="1.10.150.570">
    <property type="entry name" value="GidA associated domain, C-terminal subdomain"/>
    <property type="match status" value="1"/>
</dbReference>
<dbReference type="Gene3D" id="1.10.10.1800">
    <property type="entry name" value="tRNA uridine 5-carboxymethylaminomethyl modification enzyme MnmG/GidA"/>
    <property type="match status" value="1"/>
</dbReference>
<dbReference type="HAMAP" id="MF_00129">
    <property type="entry name" value="MnmG_GidA"/>
    <property type="match status" value="1"/>
</dbReference>
<dbReference type="InterPro" id="IPR036188">
    <property type="entry name" value="FAD/NAD-bd_sf"/>
</dbReference>
<dbReference type="InterPro" id="IPR049312">
    <property type="entry name" value="GIDA_C_N"/>
</dbReference>
<dbReference type="InterPro" id="IPR004416">
    <property type="entry name" value="MnmG"/>
</dbReference>
<dbReference type="InterPro" id="IPR002218">
    <property type="entry name" value="MnmG-rel"/>
</dbReference>
<dbReference type="InterPro" id="IPR020595">
    <property type="entry name" value="MnmG-rel_CS"/>
</dbReference>
<dbReference type="InterPro" id="IPR026904">
    <property type="entry name" value="MnmG_C"/>
</dbReference>
<dbReference type="InterPro" id="IPR047001">
    <property type="entry name" value="MnmG_C_subdom"/>
</dbReference>
<dbReference type="InterPro" id="IPR044920">
    <property type="entry name" value="MnmG_C_subdom_sf"/>
</dbReference>
<dbReference type="InterPro" id="IPR040131">
    <property type="entry name" value="MnmG_N"/>
</dbReference>
<dbReference type="NCBIfam" id="TIGR00136">
    <property type="entry name" value="mnmG_gidA"/>
    <property type="match status" value="1"/>
</dbReference>
<dbReference type="PANTHER" id="PTHR11806">
    <property type="entry name" value="GLUCOSE INHIBITED DIVISION PROTEIN A"/>
    <property type="match status" value="1"/>
</dbReference>
<dbReference type="PANTHER" id="PTHR11806:SF0">
    <property type="entry name" value="PROTEIN MTO1 HOMOLOG, MITOCHONDRIAL"/>
    <property type="match status" value="1"/>
</dbReference>
<dbReference type="Pfam" id="PF01134">
    <property type="entry name" value="GIDA"/>
    <property type="match status" value="1"/>
</dbReference>
<dbReference type="Pfam" id="PF21680">
    <property type="entry name" value="GIDA_C_1st"/>
    <property type="match status" value="1"/>
</dbReference>
<dbReference type="Pfam" id="PF13932">
    <property type="entry name" value="SAM_GIDA_C"/>
    <property type="match status" value="1"/>
</dbReference>
<dbReference type="PRINTS" id="PR00368">
    <property type="entry name" value="FADPNR"/>
</dbReference>
<dbReference type="PRINTS" id="PR00411">
    <property type="entry name" value="PNDRDTASEI"/>
</dbReference>
<dbReference type="SMART" id="SM01228">
    <property type="entry name" value="GIDA_assoc_3"/>
    <property type="match status" value="1"/>
</dbReference>
<dbReference type="SUPFAM" id="SSF51905">
    <property type="entry name" value="FAD/NAD(P)-binding domain"/>
    <property type="match status" value="1"/>
</dbReference>
<dbReference type="PROSITE" id="PS01280">
    <property type="entry name" value="GIDA_1"/>
    <property type="match status" value="1"/>
</dbReference>
<dbReference type="PROSITE" id="PS01281">
    <property type="entry name" value="GIDA_2"/>
    <property type="match status" value="1"/>
</dbReference>
<gene>
    <name evidence="1" type="primary">mnmG</name>
    <name evidence="1" type="synonym">gidA</name>
    <name type="ordered locus">FMG_1623</name>
</gene>
<comment type="function">
    <text evidence="1">NAD-binding protein involved in the addition of a carboxymethylaminomethyl (cmnm) group at the wobble position (U34) of certain tRNAs, forming tRNA-cmnm(5)s(2)U34.</text>
</comment>
<comment type="cofactor">
    <cofactor evidence="1">
        <name>FAD</name>
        <dbReference type="ChEBI" id="CHEBI:57692"/>
    </cofactor>
</comment>
<comment type="subunit">
    <text evidence="1">Homodimer. Heterotetramer of two MnmE and two MnmG subunits.</text>
</comment>
<comment type="subcellular location">
    <subcellularLocation>
        <location evidence="1">Cytoplasm</location>
    </subcellularLocation>
</comment>
<comment type="similarity">
    <text evidence="1">Belongs to the MnmG family.</text>
</comment>
<proteinExistence type="inferred from homology"/>
<evidence type="ECO:0000255" key="1">
    <source>
        <dbReference type="HAMAP-Rule" id="MF_00129"/>
    </source>
</evidence>
<sequence>MDRLYYENPYDVVVVGAGHAGCEAALATARLGLKTAIMSISLDSVADLPCNPNIGGTGKGHLVKEVDALGGEMGLVIDKTYIQSRMLNTSKGPAVHSLRVQADKRKYHDEMKSVLENTENLDLIEAEVVDIEVEDNKIKSITTAQGAIFPTRAVILATGTYLKGLVMMGEYTYESGPHGMKSSKKLSYSLKNLGIELRRFKTGTPARVHRDSLNYEVMTVQPGDDDVIPFSFLNDGKDISKKQEHCYLTYTTLKTKQIIEDNLERSPMYAGIVKGVGPRYCPSIEDKIVRFPDRDEHQVFVEPEGLSTKEMYIQGVSSTLPEEVQKEMYKTIIGFENVRFMRSAYGIEYDCIDPTILKRTLEHLEINNLFFAGQINGSSGYEEAAGQGIIAGINAAMNLLGKEPFVLDRSDAYIGVLIDDLVTKGTNEPYRMMTSRCEYRLTLRQDNADLRLTERAHEIGLATDERYEKMLHKKKTIDEEIERLKSIMVTPTEETNEKLRNLGSSELKTGITLLDLIKRPELTYDKTEEFDAERTELPRYLRLQVETHIKYEGYIAKQMSQIKQFKKLENRKLDMIEDYKEVMGLSNEAVQKLNDIKPESLGQASRISGVSPSDINVLLIYMETRKK</sequence>
<organism>
    <name type="scientific">Finegoldia magna (strain ATCC 29328 / DSM 20472 / WAL 2508)</name>
    <name type="common">Peptostreptococcus magnus</name>
    <dbReference type="NCBI Taxonomy" id="334413"/>
    <lineage>
        <taxon>Bacteria</taxon>
        <taxon>Bacillati</taxon>
        <taxon>Bacillota</taxon>
        <taxon>Tissierellia</taxon>
        <taxon>Tissierellales</taxon>
        <taxon>Peptoniphilaceae</taxon>
        <taxon>Finegoldia</taxon>
    </lineage>
</organism>
<reference key="1">
    <citation type="journal article" date="2008" name="DNA Res.">
        <title>Complete genome sequence of Finegoldia magna, an anaerobic opportunistic pathogen.</title>
        <authorList>
            <person name="Goto T."/>
            <person name="Yamashita A."/>
            <person name="Hirakawa H."/>
            <person name="Matsutani M."/>
            <person name="Todo K."/>
            <person name="Ohshima K."/>
            <person name="Toh H."/>
            <person name="Miyamoto K."/>
            <person name="Kuhara S."/>
            <person name="Hattori M."/>
            <person name="Shimizu T."/>
            <person name="Akimoto S."/>
        </authorList>
    </citation>
    <scope>NUCLEOTIDE SEQUENCE [LARGE SCALE GENOMIC DNA]</scope>
    <source>
        <strain>ATCC 29328 / DSM 20472 / WAL 2508</strain>
    </source>
</reference>
<keyword id="KW-0963">Cytoplasm</keyword>
<keyword id="KW-0274">FAD</keyword>
<keyword id="KW-0285">Flavoprotein</keyword>
<keyword id="KW-0520">NAD</keyword>
<keyword id="KW-1185">Reference proteome</keyword>
<keyword id="KW-0819">tRNA processing</keyword>